<accession>Q2FG94</accession>
<evidence type="ECO:0000255" key="1">
    <source>
        <dbReference type="HAMAP-Rule" id="MF_00518"/>
    </source>
</evidence>
<sequence>MKVVVQRVKEASVTNDTLNNQIKKGYCLLVGIGQNSTEQDADVIAKKIANARLFEDDNNKLNFNIQQMNGEILSVSQFTLYADVKKGNRPGFSNSKNPDQAVKIYEYFNDALRAYGLTVKTGEFGTHMNVSINNDGPVTIIYESQDGKIQ</sequence>
<keyword id="KW-0963">Cytoplasm</keyword>
<keyword id="KW-0378">Hydrolase</keyword>
<keyword id="KW-0694">RNA-binding</keyword>
<keyword id="KW-0820">tRNA-binding</keyword>
<comment type="function">
    <text evidence="1">An aminoacyl-tRNA editing enzyme that deacylates mischarged D-aminoacyl-tRNAs. Also deacylates mischarged glycyl-tRNA(Ala), protecting cells against glycine mischarging by AlaRS. Acts via tRNA-based rather than protein-based catalysis; rejects L-amino acids rather than detecting D-amino acids in the active site. By recycling D-aminoacyl-tRNA to D-amino acids and free tRNA molecules, this enzyme counteracts the toxicity associated with the formation of D-aminoacyl-tRNA entities in vivo and helps enforce protein L-homochirality.</text>
</comment>
<comment type="catalytic activity">
    <reaction evidence="1">
        <text>glycyl-tRNA(Ala) + H2O = tRNA(Ala) + glycine + H(+)</text>
        <dbReference type="Rhea" id="RHEA:53744"/>
        <dbReference type="Rhea" id="RHEA-COMP:9657"/>
        <dbReference type="Rhea" id="RHEA-COMP:13640"/>
        <dbReference type="ChEBI" id="CHEBI:15377"/>
        <dbReference type="ChEBI" id="CHEBI:15378"/>
        <dbReference type="ChEBI" id="CHEBI:57305"/>
        <dbReference type="ChEBI" id="CHEBI:78442"/>
        <dbReference type="ChEBI" id="CHEBI:78522"/>
        <dbReference type="EC" id="3.1.1.96"/>
    </reaction>
</comment>
<comment type="catalytic activity">
    <reaction evidence="1">
        <text>a D-aminoacyl-tRNA + H2O = a tRNA + a D-alpha-amino acid + H(+)</text>
        <dbReference type="Rhea" id="RHEA:13953"/>
        <dbReference type="Rhea" id="RHEA-COMP:10123"/>
        <dbReference type="Rhea" id="RHEA-COMP:10124"/>
        <dbReference type="ChEBI" id="CHEBI:15377"/>
        <dbReference type="ChEBI" id="CHEBI:15378"/>
        <dbReference type="ChEBI" id="CHEBI:59871"/>
        <dbReference type="ChEBI" id="CHEBI:78442"/>
        <dbReference type="ChEBI" id="CHEBI:79333"/>
        <dbReference type="EC" id="3.1.1.96"/>
    </reaction>
</comment>
<comment type="subunit">
    <text evidence="1">Homodimer.</text>
</comment>
<comment type="subcellular location">
    <subcellularLocation>
        <location evidence="1">Cytoplasm</location>
    </subcellularLocation>
</comment>
<comment type="domain">
    <text evidence="1">A Gly-cisPro motif from one monomer fits into the active site of the other monomer to allow specific chiral rejection of L-amino acids.</text>
</comment>
<comment type="similarity">
    <text evidence="1">Belongs to the DTD family.</text>
</comment>
<gene>
    <name evidence="1" type="primary">dtd</name>
    <name type="ordered locus">SAUSA300_1589</name>
</gene>
<organism>
    <name type="scientific">Staphylococcus aureus (strain USA300)</name>
    <dbReference type="NCBI Taxonomy" id="367830"/>
    <lineage>
        <taxon>Bacteria</taxon>
        <taxon>Bacillati</taxon>
        <taxon>Bacillota</taxon>
        <taxon>Bacilli</taxon>
        <taxon>Bacillales</taxon>
        <taxon>Staphylococcaceae</taxon>
        <taxon>Staphylococcus</taxon>
    </lineage>
</organism>
<reference key="1">
    <citation type="journal article" date="2006" name="Lancet">
        <title>Complete genome sequence of USA300, an epidemic clone of community-acquired meticillin-resistant Staphylococcus aureus.</title>
        <authorList>
            <person name="Diep B.A."/>
            <person name="Gill S.R."/>
            <person name="Chang R.F."/>
            <person name="Phan T.H."/>
            <person name="Chen J.H."/>
            <person name="Davidson M.G."/>
            <person name="Lin F."/>
            <person name="Lin J."/>
            <person name="Carleton H.A."/>
            <person name="Mongodin E.F."/>
            <person name="Sensabaugh G.F."/>
            <person name="Perdreau-Remington F."/>
        </authorList>
    </citation>
    <scope>NUCLEOTIDE SEQUENCE [LARGE SCALE GENOMIC DNA]</scope>
    <source>
        <strain>USA300</strain>
    </source>
</reference>
<name>DTD_STAA3</name>
<protein>
    <recommendedName>
        <fullName evidence="1">D-aminoacyl-tRNA deacylase</fullName>
        <shortName evidence="1">DTD</shortName>
        <ecNumber evidence="1">3.1.1.96</ecNumber>
    </recommendedName>
    <alternativeName>
        <fullName evidence="1">Gly-tRNA(Ala) deacylase</fullName>
    </alternativeName>
</protein>
<proteinExistence type="inferred from homology"/>
<dbReference type="EC" id="3.1.1.96" evidence="1"/>
<dbReference type="EMBL" id="CP000255">
    <property type="protein sequence ID" value="ABD20563.1"/>
    <property type="molecule type" value="Genomic_DNA"/>
</dbReference>
<dbReference type="RefSeq" id="WP_000869983.1">
    <property type="nucleotide sequence ID" value="NZ_CP027476.1"/>
</dbReference>
<dbReference type="SMR" id="Q2FG94"/>
<dbReference type="KEGG" id="saa:SAUSA300_1589"/>
<dbReference type="HOGENOM" id="CLU_076901_1_0_9"/>
<dbReference type="OMA" id="VFGADMK"/>
<dbReference type="Proteomes" id="UP000001939">
    <property type="component" value="Chromosome"/>
</dbReference>
<dbReference type="GO" id="GO:0005737">
    <property type="term" value="C:cytoplasm"/>
    <property type="evidence" value="ECO:0007669"/>
    <property type="project" value="UniProtKB-SubCell"/>
</dbReference>
<dbReference type="GO" id="GO:0051500">
    <property type="term" value="F:D-tyrosyl-tRNA(Tyr) deacylase activity"/>
    <property type="evidence" value="ECO:0007669"/>
    <property type="project" value="TreeGrafter"/>
</dbReference>
<dbReference type="GO" id="GO:0106026">
    <property type="term" value="F:Gly-tRNA(Ala) deacylase activity"/>
    <property type="evidence" value="ECO:0007669"/>
    <property type="project" value="UniProtKB-UniRule"/>
</dbReference>
<dbReference type="GO" id="GO:0043908">
    <property type="term" value="F:Ser(Gly)-tRNA(Ala) hydrolase activity"/>
    <property type="evidence" value="ECO:0007669"/>
    <property type="project" value="UniProtKB-UniRule"/>
</dbReference>
<dbReference type="GO" id="GO:0000049">
    <property type="term" value="F:tRNA binding"/>
    <property type="evidence" value="ECO:0007669"/>
    <property type="project" value="UniProtKB-UniRule"/>
</dbReference>
<dbReference type="GO" id="GO:0019478">
    <property type="term" value="P:D-amino acid catabolic process"/>
    <property type="evidence" value="ECO:0007669"/>
    <property type="project" value="UniProtKB-UniRule"/>
</dbReference>
<dbReference type="FunFam" id="3.50.80.10:FF:000005">
    <property type="entry name" value="D-aminoacyl-tRNA deacylase"/>
    <property type="match status" value="1"/>
</dbReference>
<dbReference type="Gene3D" id="3.50.80.10">
    <property type="entry name" value="D-tyrosyl-tRNA(Tyr) deacylase"/>
    <property type="match status" value="1"/>
</dbReference>
<dbReference type="HAMAP" id="MF_00518">
    <property type="entry name" value="Deacylase_Dtd"/>
    <property type="match status" value="1"/>
</dbReference>
<dbReference type="InterPro" id="IPR003732">
    <property type="entry name" value="Daa-tRNA_deacyls_DTD"/>
</dbReference>
<dbReference type="InterPro" id="IPR023509">
    <property type="entry name" value="DTD-like_sf"/>
</dbReference>
<dbReference type="NCBIfam" id="TIGR00256">
    <property type="entry name" value="D-aminoacyl-tRNA deacylase"/>
    <property type="match status" value="1"/>
</dbReference>
<dbReference type="PANTHER" id="PTHR10472:SF5">
    <property type="entry name" value="D-AMINOACYL-TRNA DEACYLASE 1"/>
    <property type="match status" value="1"/>
</dbReference>
<dbReference type="PANTHER" id="PTHR10472">
    <property type="entry name" value="D-TYROSYL-TRNA TYR DEACYLASE"/>
    <property type="match status" value="1"/>
</dbReference>
<dbReference type="Pfam" id="PF02580">
    <property type="entry name" value="Tyr_Deacylase"/>
    <property type="match status" value="1"/>
</dbReference>
<dbReference type="SUPFAM" id="SSF69500">
    <property type="entry name" value="DTD-like"/>
    <property type="match status" value="1"/>
</dbReference>
<feature type="chain" id="PRO_0000259318" description="D-aminoacyl-tRNA deacylase">
    <location>
        <begin position="1"/>
        <end position="150"/>
    </location>
</feature>
<feature type="short sequence motif" description="Gly-cisPro motif, important for rejection of L-amino acids" evidence="1">
    <location>
        <begin position="136"/>
        <end position="137"/>
    </location>
</feature>